<reference key="1">
    <citation type="journal article" date="1997" name="Genome Res.">
        <title>A region of mouse chromosome 16 is syntenic to the DiGeorge, velocardiofacial syndrome minimal critical region.</title>
        <authorList>
            <person name="Galili N."/>
            <person name="Baldwin H.S."/>
            <person name="Lund J."/>
            <person name="Reeves R."/>
            <person name="Gong W."/>
            <person name="Wang Z."/>
            <person name="Roe B.A."/>
            <person name="Emanuel B.S."/>
            <person name="Nayak S."/>
            <person name="Mickanin C."/>
            <person name="Budarf M.L."/>
            <person name="Buck C.A."/>
        </authorList>
    </citation>
    <scope>NUCLEOTIDE SEQUENCE [GENOMIC DNA]</scope>
    <source>
        <tissue>Embryo</tissue>
    </source>
</reference>
<reference key="2">
    <citation type="journal article" date="1997" name="Genome Res.">
        <authorList>
            <person name="Galili N."/>
            <person name="Baldwin H.S."/>
            <person name="Lund J."/>
            <person name="Reeves R."/>
            <person name="Gong W."/>
            <person name="Wang Z."/>
            <person name="Roe B.A."/>
            <person name="Emanuel B.S."/>
            <person name="Nayak S."/>
            <person name="Mickanin C."/>
            <person name="Budarf M.L."/>
            <person name="Buck C.A."/>
        </authorList>
    </citation>
    <scope>ERRATUM OF PUBMED:9037598</scope>
</reference>
<reference key="3">
    <citation type="journal article" date="1998" name="Hum. Mol. Genet.">
        <title>ES2, a gene deleted in DiGeorge syndrome, encodes a nuclear protein and is expressed during early mouse development, where it shares an expression domain with a Goosecoid-like gene.</title>
        <authorList>
            <person name="Lindsay E.A."/>
            <person name="Harvey E.L."/>
            <person name="Scambler P.J."/>
            <person name="Baldini A.B."/>
        </authorList>
    </citation>
    <scope>NUCLEOTIDE SEQUENCE [MRNA]</scope>
    <source>
        <tissue>Embryo</tissue>
    </source>
</reference>
<reference key="4">
    <citation type="journal article" date="2005" name="Science">
        <title>The transcriptional landscape of the mammalian genome.</title>
        <authorList>
            <person name="Carninci P."/>
            <person name="Kasukawa T."/>
            <person name="Katayama S."/>
            <person name="Gough J."/>
            <person name="Frith M.C."/>
            <person name="Maeda N."/>
            <person name="Oyama R."/>
            <person name="Ravasi T."/>
            <person name="Lenhard B."/>
            <person name="Wells C."/>
            <person name="Kodzius R."/>
            <person name="Shimokawa K."/>
            <person name="Bajic V.B."/>
            <person name="Brenner S.E."/>
            <person name="Batalov S."/>
            <person name="Forrest A.R."/>
            <person name="Zavolan M."/>
            <person name="Davis M.J."/>
            <person name="Wilming L.G."/>
            <person name="Aidinis V."/>
            <person name="Allen J.E."/>
            <person name="Ambesi-Impiombato A."/>
            <person name="Apweiler R."/>
            <person name="Aturaliya R.N."/>
            <person name="Bailey T.L."/>
            <person name="Bansal M."/>
            <person name="Baxter L."/>
            <person name="Beisel K.W."/>
            <person name="Bersano T."/>
            <person name="Bono H."/>
            <person name="Chalk A.M."/>
            <person name="Chiu K.P."/>
            <person name="Choudhary V."/>
            <person name="Christoffels A."/>
            <person name="Clutterbuck D.R."/>
            <person name="Crowe M.L."/>
            <person name="Dalla E."/>
            <person name="Dalrymple B.P."/>
            <person name="de Bono B."/>
            <person name="Della Gatta G."/>
            <person name="di Bernardo D."/>
            <person name="Down T."/>
            <person name="Engstrom P."/>
            <person name="Fagiolini M."/>
            <person name="Faulkner G."/>
            <person name="Fletcher C.F."/>
            <person name="Fukushima T."/>
            <person name="Furuno M."/>
            <person name="Futaki S."/>
            <person name="Gariboldi M."/>
            <person name="Georgii-Hemming P."/>
            <person name="Gingeras T.R."/>
            <person name="Gojobori T."/>
            <person name="Green R.E."/>
            <person name="Gustincich S."/>
            <person name="Harbers M."/>
            <person name="Hayashi Y."/>
            <person name="Hensch T.K."/>
            <person name="Hirokawa N."/>
            <person name="Hill D."/>
            <person name="Huminiecki L."/>
            <person name="Iacono M."/>
            <person name="Ikeo K."/>
            <person name="Iwama A."/>
            <person name="Ishikawa T."/>
            <person name="Jakt M."/>
            <person name="Kanapin A."/>
            <person name="Katoh M."/>
            <person name="Kawasawa Y."/>
            <person name="Kelso J."/>
            <person name="Kitamura H."/>
            <person name="Kitano H."/>
            <person name="Kollias G."/>
            <person name="Krishnan S.P."/>
            <person name="Kruger A."/>
            <person name="Kummerfeld S.K."/>
            <person name="Kurochkin I.V."/>
            <person name="Lareau L.F."/>
            <person name="Lazarevic D."/>
            <person name="Lipovich L."/>
            <person name="Liu J."/>
            <person name="Liuni S."/>
            <person name="McWilliam S."/>
            <person name="Madan Babu M."/>
            <person name="Madera M."/>
            <person name="Marchionni L."/>
            <person name="Matsuda H."/>
            <person name="Matsuzawa S."/>
            <person name="Miki H."/>
            <person name="Mignone F."/>
            <person name="Miyake S."/>
            <person name="Morris K."/>
            <person name="Mottagui-Tabar S."/>
            <person name="Mulder N."/>
            <person name="Nakano N."/>
            <person name="Nakauchi H."/>
            <person name="Ng P."/>
            <person name="Nilsson R."/>
            <person name="Nishiguchi S."/>
            <person name="Nishikawa S."/>
            <person name="Nori F."/>
            <person name="Ohara O."/>
            <person name="Okazaki Y."/>
            <person name="Orlando V."/>
            <person name="Pang K.C."/>
            <person name="Pavan W.J."/>
            <person name="Pavesi G."/>
            <person name="Pesole G."/>
            <person name="Petrovsky N."/>
            <person name="Piazza S."/>
            <person name="Reed J."/>
            <person name="Reid J.F."/>
            <person name="Ring B.Z."/>
            <person name="Ringwald M."/>
            <person name="Rost B."/>
            <person name="Ruan Y."/>
            <person name="Salzberg S.L."/>
            <person name="Sandelin A."/>
            <person name="Schneider C."/>
            <person name="Schoenbach C."/>
            <person name="Sekiguchi K."/>
            <person name="Semple C.A."/>
            <person name="Seno S."/>
            <person name="Sessa L."/>
            <person name="Sheng Y."/>
            <person name="Shibata Y."/>
            <person name="Shimada H."/>
            <person name="Shimada K."/>
            <person name="Silva D."/>
            <person name="Sinclair B."/>
            <person name="Sperling S."/>
            <person name="Stupka E."/>
            <person name="Sugiura K."/>
            <person name="Sultana R."/>
            <person name="Takenaka Y."/>
            <person name="Taki K."/>
            <person name="Tammoja K."/>
            <person name="Tan S.L."/>
            <person name="Tang S."/>
            <person name="Taylor M.S."/>
            <person name="Tegner J."/>
            <person name="Teichmann S.A."/>
            <person name="Ueda H.R."/>
            <person name="van Nimwegen E."/>
            <person name="Verardo R."/>
            <person name="Wei C.L."/>
            <person name="Yagi K."/>
            <person name="Yamanishi H."/>
            <person name="Zabarovsky E."/>
            <person name="Zhu S."/>
            <person name="Zimmer A."/>
            <person name="Hide W."/>
            <person name="Bult C."/>
            <person name="Grimmond S.M."/>
            <person name="Teasdale R.D."/>
            <person name="Liu E.T."/>
            <person name="Brusic V."/>
            <person name="Quackenbush J."/>
            <person name="Wahlestedt C."/>
            <person name="Mattick J.S."/>
            <person name="Hume D.A."/>
            <person name="Kai C."/>
            <person name="Sasaki D."/>
            <person name="Tomaru Y."/>
            <person name="Fukuda S."/>
            <person name="Kanamori-Katayama M."/>
            <person name="Suzuki M."/>
            <person name="Aoki J."/>
            <person name="Arakawa T."/>
            <person name="Iida J."/>
            <person name="Imamura K."/>
            <person name="Itoh M."/>
            <person name="Kato T."/>
            <person name="Kawaji H."/>
            <person name="Kawagashira N."/>
            <person name="Kawashima T."/>
            <person name="Kojima M."/>
            <person name="Kondo S."/>
            <person name="Konno H."/>
            <person name="Nakano K."/>
            <person name="Ninomiya N."/>
            <person name="Nishio T."/>
            <person name="Okada M."/>
            <person name="Plessy C."/>
            <person name="Shibata K."/>
            <person name="Shiraki T."/>
            <person name="Suzuki S."/>
            <person name="Tagami M."/>
            <person name="Waki K."/>
            <person name="Watahiki A."/>
            <person name="Okamura-Oho Y."/>
            <person name="Suzuki H."/>
            <person name="Kawai J."/>
            <person name="Hayashizaki Y."/>
        </authorList>
    </citation>
    <scope>NUCLEOTIDE SEQUENCE [LARGE SCALE MRNA]</scope>
    <source>
        <strain>NOD</strain>
        <tissue>Thymus</tissue>
    </source>
</reference>
<reference key="5">
    <citation type="journal article" date="2004" name="Genome Res.">
        <title>The status, quality, and expansion of the NIH full-length cDNA project: the Mammalian Gene Collection (MGC).</title>
        <authorList>
            <consortium name="The MGC Project Team"/>
        </authorList>
    </citation>
    <scope>NUCLEOTIDE SEQUENCE [LARGE SCALE MRNA]</scope>
    <source>
        <tissue>Mammary gland</tissue>
    </source>
</reference>
<reference key="6">
    <citation type="journal article" date="2010" name="Cell">
        <title>A tissue-specific atlas of mouse protein phosphorylation and expression.</title>
        <authorList>
            <person name="Huttlin E.L."/>
            <person name="Jedrychowski M.P."/>
            <person name="Elias J.E."/>
            <person name="Goswami T."/>
            <person name="Rad R."/>
            <person name="Beausoleil S.A."/>
            <person name="Villen J."/>
            <person name="Haas W."/>
            <person name="Sowa M.E."/>
            <person name="Gygi S.P."/>
        </authorList>
    </citation>
    <scope>PHOSPHORYLATION [LARGE SCALE ANALYSIS] AT SER-394</scope>
    <scope>IDENTIFICATION BY MASS SPECTROMETRY [LARGE SCALE ANALYSIS]</scope>
    <source>
        <tissue>Heart</tissue>
        <tissue>Kidney</tissue>
    </source>
</reference>
<protein>
    <recommendedName>
        <fullName>Splicing factor ESS-2 homolog</fullName>
    </recommendedName>
    <alternativeName>
        <fullName>ES2 protein</fullName>
    </alternativeName>
    <alternativeName>
        <fullName>Expressed sequence 2 embryonic lethal</fullName>
    </alternativeName>
</protein>
<comment type="function">
    <text evidence="1">May be involved in pre-mRNA splicing.</text>
</comment>
<comment type="subunit">
    <text evidence="2">Identified in the spliceosome C complex. Interacts with FRA10AC1.</text>
</comment>
<comment type="subcellular location">
    <subcellularLocation>
        <location evidence="1">Nucleus</location>
    </subcellularLocation>
</comment>
<comment type="tissue specificity">
    <text>In the adult, widely expressed with highest expression in the testis and brain. Also widely expressed in the embryo with highest levels in the anterior pons.</text>
</comment>
<comment type="developmental stage">
    <text>Highly expressed during embryogenesis from 7 dpc onwards.</text>
</comment>
<comment type="similarity">
    <text evidence="4">Belongs to the ESS2 family.</text>
</comment>
<proteinExistence type="evidence at protein level"/>
<evidence type="ECO:0000250" key="1">
    <source>
        <dbReference type="UniProtKB" id="P34420"/>
    </source>
</evidence>
<evidence type="ECO:0000250" key="2">
    <source>
        <dbReference type="UniProtKB" id="Q96DF8"/>
    </source>
</evidence>
<evidence type="ECO:0000256" key="3">
    <source>
        <dbReference type="SAM" id="MobiDB-lite"/>
    </source>
</evidence>
<evidence type="ECO:0000305" key="4"/>
<evidence type="ECO:0007744" key="5">
    <source>
    </source>
</evidence>
<organism>
    <name type="scientific">Mus musculus</name>
    <name type="common">Mouse</name>
    <dbReference type="NCBI Taxonomy" id="10090"/>
    <lineage>
        <taxon>Eukaryota</taxon>
        <taxon>Metazoa</taxon>
        <taxon>Chordata</taxon>
        <taxon>Craniata</taxon>
        <taxon>Vertebrata</taxon>
        <taxon>Euteleostomi</taxon>
        <taxon>Mammalia</taxon>
        <taxon>Eutheria</taxon>
        <taxon>Euarchontoglires</taxon>
        <taxon>Glires</taxon>
        <taxon>Rodentia</taxon>
        <taxon>Myomorpha</taxon>
        <taxon>Muroidea</taxon>
        <taxon>Muridae</taxon>
        <taxon>Murinae</taxon>
        <taxon>Mus</taxon>
        <taxon>Mus</taxon>
    </lineage>
</organism>
<accession>O70279</accession>
<accession>Q91YX1</accession>
<name>ESS2_MOUSE</name>
<dbReference type="EMBL" id="AC004412">
    <property type="status" value="NOT_ANNOTATED_CDS"/>
    <property type="molecule type" value="Genomic_DNA"/>
</dbReference>
<dbReference type="EMBL" id="AF037256">
    <property type="protein sequence ID" value="AAC40077.1"/>
    <property type="molecule type" value="mRNA"/>
</dbReference>
<dbReference type="EMBL" id="AK088520">
    <property type="protein sequence ID" value="BAC40400.1"/>
    <property type="molecule type" value="mRNA"/>
</dbReference>
<dbReference type="EMBL" id="BC013711">
    <property type="protein sequence ID" value="AAH13711.1"/>
    <property type="molecule type" value="mRNA"/>
</dbReference>
<dbReference type="CCDS" id="CCDS88893.1"/>
<dbReference type="RefSeq" id="NP_001075102.1">
    <property type="nucleotide sequence ID" value="NM_001081633.1"/>
</dbReference>
<dbReference type="SMR" id="O70279"/>
<dbReference type="FunCoup" id="O70279">
    <property type="interactions" value="2859"/>
</dbReference>
<dbReference type="STRING" id="10090.ENSMUSP00000003621"/>
<dbReference type="GlyGen" id="O70279">
    <property type="glycosylation" value="5 sites, 1 O-linked glycan (2 sites)"/>
</dbReference>
<dbReference type="iPTMnet" id="O70279"/>
<dbReference type="PhosphoSitePlus" id="O70279"/>
<dbReference type="jPOST" id="O70279"/>
<dbReference type="PaxDb" id="10090-ENSMUSP00000003621"/>
<dbReference type="PeptideAtlas" id="O70279"/>
<dbReference type="ProteomicsDB" id="275479"/>
<dbReference type="Pumba" id="O70279"/>
<dbReference type="Antibodypedia" id="245">
    <property type="antibodies" value="103 antibodies from 18 providers"/>
</dbReference>
<dbReference type="DNASU" id="27886"/>
<dbReference type="Ensembl" id="ENSMUST00000232423.2">
    <property type="protein sequence ID" value="ENSMUSP00000156085.2"/>
    <property type="gene ID" value="ENSMUSG00000003527.10"/>
</dbReference>
<dbReference type="GeneID" id="27886"/>
<dbReference type="KEGG" id="mmu:27886"/>
<dbReference type="UCSC" id="uc007ymn.1">
    <property type="organism name" value="mouse"/>
</dbReference>
<dbReference type="AGR" id="MGI:107854"/>
<dbReference type="CTD" id="8220"/>
<dbReference type="MGI" id="MGI:107854">
    <property type="gene designation" value="Ess2"/>
</dbReference>
<dbReference type="VEuPathDB" id="HostDB:ENSMUSG00000003527"/>
<dbReference type="eggNOG" id="KOG2627">
    <property type="taxonomic scope" value="Eukaryota"/>
</dbReference>
<dbReference type="GeneTree" id="ENSGT00390000009387"/>
<dbReference type="InParanoid" id="O70279"/>
<dbReference type="OrthoDB" id="19679at2759"/>
<dbReference type="BioGRID-ORCS" id="27886">
    <property type="hits" value="17 hits in 80 CRISPR screens"/>
</dbReference>
<dbReference type="ChiTaRS" id="Dgcr14">
    <property type="organism name" value="mouse"/>
</dbReference>
<dbReference type="PRO" id="PR:O70279"/>
<dbReference type="Proteomes" id="UP000000589">
    <property type="component" value="Chromosome 16"/>
</dbReference>
<dbReference type="RNAct" id="O70279">
    <property type="molecule type" value="protein"/>
</dbReference>
<dbReference type="Bgee" id="ENSMUSG00000003527">
    <property type="expression patterns" value="Expressed in animal zygote and 213 other cell types or tissues"/>
</dbReference>
<dbReference type="ExpressionAtlas" id="O70279">
    <property type="expression patterns" value="baseline and differential"/>
</dbReference>
<dbReference type="GO" id="GO:0005634">
    <property type="term" value="C:nucleus"/>
    <property type="evidence" value="ECO:0000314"/>
    <property type="project" value="UniProtKB"/>
</dbReference>
<dbReference type="GO" id="GO:0005681">
    <property type="term" value="C:spliceosomal complex"/>
    <property type="evidence" value="ECO:0007669"/>
    <property type="project" value="UniProtKB-KW"/>
</dbReference>
<dbReference type="GO" id="GO:0000398">
    <property type="term" value="P:mRNA splicing, via spliceosome"/>
    <property type="evidence" value="ECO:0000250"/>
    <property type="project" value="UniProtKB"/>
</dbReference>
<dbReference type="GO" id="GO:0007399">
    <property type="term" value="P:nervous system development"/>
    <property type="evidence" value="ECO:0000270"/>
    <property type="project" value="UniProtKB"/>
</dbReference>
<dbReference type="InterPro" id="IPR019148">
    <property type="entry name" value="Nuclear_protein_DGCR14_ESS-2"/>
</dbReference>
<dbReference type="PANTHER" id="PTHR12940">
    <property type="entry name" value="ES-2 PROTEIN - RELATED"/>
    <property type="match status" value="1"/>
</dbReference>
<dbReference type="PANTHER" id="PTHR12940:SF0">
    <property type="entry name" value="SPLICING FACTOR ESS-2 HOMOLOG"/>
    <property type="match status" value="1"/>
</dbReference>
<dbReference type="Pfam" id="PF09751">
    <property type="entry name" value="Es2"/>
    <property type="match status" value="1"/>
</dbReference>
<feature type="chain" id="PRO_0000079877" description="Splicing factor ESS-2 homolog">
    <location>
        <begin position="1"/>
        <end position="479"/>
    </location>
</feature>
<feature type="region of interest" description="Disordered" evidence="3">
    <location>
        <begin position="1"/>
        <end position="38"/>
    </location>
</feature>
<feature type="region of interest" description="Disordered" evidence="3">
    <location>
        <begin position="95"/>
        <end position="152"/>
    </location>
</feature>
<feature type="region of interest" description="Disordered" evidence="3">
    <location>
        <begin position="415"/>
        <end position="479"/>
    </location>
</feature>
<feature type="compositionally biased region" description="Low complexity" evidence="3">
    <location>
        <begin position="7"/>
        <end position="19"/>
    </location>
</feature>
<feature type="compositionally biased region" description="Acidic residues" evidence="3">
    <location>
        <begin position="135"/>
        <end position="145"/>
    </location>
</feature>
<feature type="compositionally biased region" description="Low complexity" evidence="3">
    <location>
        <begin position="433"/>
        <end position="454"/>
    </location>
</feature>
<feature type="compositionally biased region" description="Polar residues" evidence="3">
    <location>
        <begin position="455"/>
        <end position="466"/>
    </location>
</feature>
<feature type="modified residue" description="N-acetylmethionine" evidence="2">
    <location>
        <position position="1"/>
    </location>
</feature>
<feature type="modified residue" description="Phosphothreonine" evidence="2">
    <location>
        <position position="3"/>
    </location>
</feature>
<feature type="modified residue" description="Phosphoserine" evidence="2">
    <location>
        <position position="295"/>
    </location>
</feature>
<feature type="modified residue" description="Phosphothreonine" evidence="2">
    <location>
        <position position="389"/>
    </location>
</feature>
<feature type="modified residue" description="Phosphoserine" evidence="5">
    <location>
        <position position="394"/>
    </location>
</feature>
<feature type="modified residue" description="Phosphoserine" evidence="2">
    <location>
        <position position="398"/>
    </location>
</feature>
<feature type="cross-link" description="Glycyl lysine isopeptide (Lys-Gly) (interchain with G-Cter in SUMO2)" evidence="2">
    <location>
        <position position="145"/>
    </location>
</feature>
<feature type="sequence conflict" description="In Ref. 3; AAC40077." evidence="4" ref="3">
    <original>R</original>
    <variation>P</variation>
    <location>
        <position position="84"/>
    </location>
</feature>
<feature type="sequence conflict" description="In Ref. 3; AAC40077." evidence="4" ref="3">
    <original>D</original>
    <variation>DA</variation>
    <location>
        <position position="136"/>
    </location>
</feature>
<feature type="sequence conflict" description="In Ref. 3; AAC40077." evidence="4" ref="3">
    <original>AL</original>
    <variation>PV</variation>
    <location>
        <begin position="416"/>
        <end position="417"/>
    </location>
</feature>
<feature type="sequence conflict" description="In Ref. 4; BAC40400." evidence="4" ref="4">
    <original>S</original>
    <variation>F</variation>
    <location>
        <position position="449"/>
    </location>
</feature>
<sequence>MGTPGTSAGALFLSSASAPSRKRAAGEAGEAGVARSRQRVLDEEEYIEGLQTVIQRDFFPDVEKLQAQKEYLEAEENGDLERMRQIAIKFGSALGKISREPPPPYVTPATFETPEVHPGSAVLGNKPRPQGRDLDDGEAGEEEEKEPLPSLDVFLSQYTSEDNASFQEIMEVAKEKSHARHAWLYQAEEEFEKRQKDNLELPSAEHQAIESSQAGVETWKYKAKNSLMYYPEGVPDEEQLFKKPRQIVHKNTRFLRDPFSQALSRSQLQQAAALNAQHKQGKVGPDGKELIPQESPRVGGFGFVATPSPAPGVNESPLMTWGEVENTPLRVEGSESPYVDRTPGPTFKILEPGRRERLGLKMANEAAAKNRAKKQEALRRVTENLASLTPKGLSPAMSPALQRLVSRTASKYTDRALRASYTPSPARSSHLKTPAGGPQTPTSTPAPGSATRTPLTQDPASITDNLLQLPARRKASDFF</sequence>
<gene>
    <name type="primary">Ess2</name>
    <name type="synonym">Dgcr14</name>
    <name type="synonym">Dgsi</name>
    <name type="synonym">Es2</name>
    <name type="synonym">Es2el</name>
</gene>
<keyword id="KW-0007">Acetylation</keyword>
<keyword id="KW-1017">Isopeptide bond</keyword>
<keyword id="KW-0507">mRNA processing</keyword>
<keyword id="KW-0508">mRNA splicing</keyword>
<keyword id="KW-0539">Nucleus</keyword>
<keyword id="KW-0597">Phosphoprotein</keyword>
<keyword id="KW-1185">Reference proteome</keyword>
<keyword id="KW-0747">Spliceosome</keyword>
<keyword id="KW-0832">Ubl conjugation</keyword>